<proteinExistence type="inferred from homology"/>
<sequence length="237" mass="27030">MQKLAELYRGKAKTVYTTENPDLLVLEFRNDTSALDGQRIEQFDRKGMVNNKFNHFIMTKLEEAGIPTQMERLLSDTEVLVKKLEMIPVECVIRNRAAGSLVKRLGIEEGLSLNPPLFDLFLKNDAMHDPMVNESYCKTFGWATEAQLARMKELSYLANDVLSKLFDDAGLILVDFKLEFGLFNGEVVLGDEFSPDGSRLWDKKTLNKMDKDRYRQSLGGLIEAYEEVAHRIGVKLD</sequence>
<dbReference type="EC" id="6.3.2.6" evidence="1"/>
<dbReference type="EMBL" id="CP000950">
    <property type="protein sequence ID" value="ACA67658.1"/>
    <property type="molecule type" value="Genomic_DNA"/>
</dbReference>
<dbReference type="RefSeq" id="WP_002208555.1">
    <property type="nucleotide sequence ID" value="NZ_CP009792.1"/>
</dbReference>
<dbReference type="SMR" id="B1JSG7"/>
<dbReference type="GeneID" id="57975643"/>
<dbReference type="KEGG" id="ypy:YPK_1364"/>
<dbReference type="PATRIC" id="fig|502800.11.peg.2001"/>
<dbReference type="UniPathway" id="UPA00074">
    <property type="reaction ID" value="UER00131"/>
</dbReference>
<dbReference type="GO" id="GO:0005829">
    <property type="term" value="C:cytosol"/>
    <property type="evidence" value="ECO:0007669"/>
    <property type="project" value="TreeGrafter"/>
</dbReference>
<dbReference type="GO" id="GO:0005524">
    <property type="term" value="F:ATP binding"/>
    <property type="evidence" value="ECO:0007669"/>
    <property type="project" value="UniProtKB-KW"/>
</dbReference>
<dbReference type="GO" id="GO:0004639">
    <property type="term" value="F:phosphoribosylaminoimidazolesuccinocarboxamide synthase activity"/>
    <property type="evidence" value="ECO:0007669"/>
    <property type="project" value="UniProtKB-UniRule"/>
</dbReference>
<dbReference type="GO" id="GO:0006189">
    <property type="term" value="P:'de novo' IMP biosynthetic process"/>
    <property type="evidence" value="ECO:0007669"/>
    <property type="project" value="UniProtKB-UniRule"/>
</dbReference>
<dbReference type="GO" id="GO:0009236">
    <property type="term" value="P:cobalamin biosynthetic process"/>
    <property type="evidence" value="ECO:0007669"/>
    <property type="project" value="InterPro"/>
</dbReference>
<dbReference type="CDD" id="cd01415">
    <property type="entry name" value="SAICAR_synt_PurC"/>
    <property type="match status" value="1"/>
</dbReference>
<dbReference type="FunFam" id="3.30.200.20:FF:000086">
    <property type="entry name" value="Phosphoribosylaminoimidazole-succinocarboxamide synthase"/>
    <property type="match status" value="1"/>
</dbReference>
<dbReference type="FunFam" id="3.30.470.20:FF:000006">
    <property type="entry name" value="Phosphoribosylaminoimidazole-succinocarboxamide synthase"/>
    <property type="match status" value="1"/>
</dbReference>
<dbReference type="Gene3D" id="3.30.470.20">
    <property type="entry name" value="ATP-grasp fold, B domain"/>
    <property type="match status" value="1"/>
</dbReference>
<dbReference type="Gene3D" id="3.30.200.20">
    <property type="entry name" value="Phosphorylase Kinase, domain 1"/>
    <property type="match status" value="1"/>
</dbReference>
<dbReference type="HAMAP" id="MF_00137">
    <property type="entry name" value="SAICAR_synth"/>
    <property type="match status" value="1"/>
</dbReference>
<dbReference type="InterPro" id="IPR028923">
    <property type="entry name" value="SAICAR_synt/ADE2_N"/>
</dbReference>
<dbReference type="InterPro" id="IPR033934">
    <property type="entry name" value="SAICAR_synt_PurC"/>
</dbReference>
<dbReference type="InterPro" id="IPR001636">
    <property type="entry name" value="SAICAR_synth"/>
</dbReference>
<dbReference type="InterPro" id="IPR050089">
    <property type="entry name" value="SAICAR_synthetase"/>
</dbReference>
<dbReference type="InterPro" id="IPR018236">
    <property type="entry name" value="SAICAR_synthetase_CS"/>
</dbReference>
<dbReference type="NCBIfam" id="TIGR00081">
    <property type="entry name" value="purC"/>
    <property type="match status" value="1"/>
</dbReference>
<dbReference type="PANTHER" id="PTHR43599">
    <property type="entry name" value="MULTIFUNCTIONAL PROTEIN ADE2"/>
    <property type="match status" value="1"/>
</dbReference>
<dbReference type="PANTHER" id="PTHR43599:SF3">
    <property type="entry name" value="SI:DKEY-6E2.2"/>
    <property type="match status" value="1"/>
</dbReference>
<dbReference type="Pfam" id="PF01259">
    <property type="entry name" value="SAICAR_synt"/>
    <property type="match status" value="1"/>
</dbReference>
<dbReference type="SUPFAM" id="SSF56104">
    <property type="entry name" value="SAICAR synthase-like"/>
    <property type="match status" value="1"/>
</dbReference>
<dbReference type="PROSITE" id="PS01057">
    <property type="entry name" value="SAICAR_SYNTHETASE_1"/>
    <property type="match status" value="1"/>
</dbReference>
<dbReference type="PROSITE" id="PS01058">
    <property type="entry name" value="SAICAR_SYNTHETASE_2"/>
    <property type="match status" value="1"/>
</dbReference>
<accession>B1JSG7</accession>
<comment type="catalytic activity">
    <reaction evidence="1">
        <text>5-amino-1-(5-phospho-D-ribosyl)imidazole-4-carboxylate + L-aspartate + ATP = (2S)-2-[5-amino-1-(5-phospho-beta-D-ribosyl)imidazole-4-carboxamido]succinate + ADP + phosphate + 2 H(+)</text>
        <dbReference type="Rhea" id="RHEA:22628"/>
        <dbReference type="ChEBI" id="CHEBI:15378"/>
        <dbReference type="ChEBI" id="CHEBI:29991"/>
        <dbReference type="ChEBI" id="CHEBI:30616"/>
        <dbReference type="ChEBI" id="CHEBI:43474"/>
        <dbReference type="ChEBI" id="CHEBI:58443"/>
        <dbReference type="ChEBI" id="CHEBI:77657"/>
        <dbReference type="ChEBI" id="CHEBI:456216"/>
        <dbReference type="EC" id="6.3.2.6"/>
    </reaction>
</comment>
<comment type="pathway">
    <text evidence="1">Purine metabolism; IMP biosynthesis via de novo pathway; 5-amino-1-(5-phospho-D-ribosyl)imidazole-4-carboxamide from 5-amino-1-(5-phospho-D-ribosyl)imidazole-4-carboxylate: step 1/2.</text>
</comment>
<comment type="similarity">
    <text evidence="1">Belongs to the SAICAR synthetase family.</text>
</comment>
<reference key="1">
    <citation type="submission" date="2008-02" db="EMBL/GenBank/DDBJ databases">
        <title>Complete sequence of Yersinia pseudotuberculosis YPIII.</title>
        <authorList>
            <consortium name="US DOE Joint Genome Institute"/>
            <person name="Copeland A."/>
            <person name="Lucas S."/>
            <person name="Lapidus A."/>
            <person name="Glavina del Rio T."/>
            <person name="Dalin E."/>
            <person name="Tice H."/>
            <person name="Bruce D."/>
            <person name="Goodwin L."/>
            <person name="Pitluck S."/>
            <person name="Munk A.C."/>
            <person name="Brettin T."/>
            <person name="Detter J.C."/>
            <person name="Han C."/>
            <person name="Tapia R."/>
            <person name="Schmutz J."/>
            <person name="Larimer F."/>
            <person name="Land M."/>
            <person name="Hauser L."/>
            <person name="Challacombe J.F."/>
            <person name="Green L."/>
            <person name="Lindler L.E."/>
            <person name="Nikolich M.P."/>
            <person name="Richardson P."/>
        </authorList>
    </citation>
    <scope>NUCLEOTIDE SEQUENCE [LARGE SCALE GENOMIC DNA]</scope>
    <source>
        <strain>YPIII</strain>
    </source>
</reference>
<protein>
    <recommendedName>
        <fullName evidence="1">Phosphoribosylaminoimidazole-succinocarboxamide synthase</fullName>
        <ecNumber evidence="1">6.3.2.6</ecNumber>
    </recommendedName>
    <alternativeName>
        <fullName evidence="1">SAICAR synthetase</fullName>
    </alternativeName>
</protein>
<evidence type="ECO:0000255" key="1">
    <source>
        <dbReference type="HAMAP-Rule" id="MF_00137"/>
    </source>
</evidence>
<gene>
    <name evidence="1" type="primary">purC</name>
    <name type="ordered locus">YPK_1364</name>
</gene>
<feature type="chain" id="PRO_1000096033" description="Phosphoribosylaminoimidazole-succinocarboxamide synthase">
    <location>
        <begin position="1"/>
        <end position="237"/>
    </location>
</feature>
<keyword id="KW-0067">ATP-binding</keyword>
<keyword id="KW-0436">Ligase</keyword>
<keyword id="KW-0547">Nucleotide-binding</keyword>
<keyword id="KW-0658">Purine biosynthesis</keyword>
<name>PUR7_YERPY</name>
<organism>
    <name type="scientific">Yersinia pseudotuberculosis serotype O:3 (strain YPIII)</name>
    <dbReference type="NCBI Taxonomy" id="502800"/>
    <lineage>
        <taxon>Bacteria</taxon>
        <taxon>Pseudomonadati</taxon>
        <taxon>Pseudomonadota</taxon>
        <taxon>Gammaproteobacteria</taxon>
        <taxon>Enterobacterales</taxon>
        <taxon>Yersiniaceae</taxon>
        <taxon>Yersinia</taxon>
    </lineage>
</organism>